<protein>
    <recommendedName>
        <fullName evidence="5">Glycophorin-A</fullName>
    </recommendedName>
    <cdAntigenName>CD235a</cdAntigenName>
</protein>
<evidence type="ECO:0000250" key="1"/>
<evidence type="ECO:0000250" key="2">
    <source>
        <dbReference type="UniProtKB" id="P02724"/>
    </source>
</evidence>
<evidence type="ECO:0000256" key="3">
    <source>
        <dbReference type="SAM" id="MobiDB-lite"/>
    </source>
</evidence>
<evidence type="ECO:0000269" key="4">
    <source>
    </source>
</evidence>
<evidence type="ECO:0000305" key="5"/>
<evidence type="ECO:0000312" key="6">
    <source>
        <dbReference type="MGI" id="MGI:95880"/>
    </source>
</evidence>
<evidence type="ECO:0007744" key="7">
    <source>
    </source>
</evidence>
<dbReference type="EMBL" id="M26385">
    <property type="protein sequence ID" value="AAA37709.1"/>
    <property type="molecule type" value="mRNA"/>
</dbReference>
<dbReference type="EMBL" id="M73815">
    <property type="protein sequence ID" value="AAA37708.1"/>
    <property type="molecule type" value="Genomic_DNA"/>
</dbReference>
<dbReference type="CCDS" id="CCDS40399.1"/>
<dbReference type="PIR" id="JN0073">
    <property type="entry name" value="JN0073"/>
</dbReference>
<dbReference type="RefSeq" id="NP_034499.3">
    <property type="nucleotide sequence ID" value="NM_010369.3"/>
</dbReference>
<dbReference type="SMR" id="P14220"/>
<dbReference type="BioGRID" id="200131">
    <property type="interactions" value="2"/>
</dbReference>
<dbReference type="FunCoup" id="P14220">
    <property type="interactions" value="91"/>
</dbReference>
<dbReference type="STRING" id="10090.ENSMUSP00000070836"/>
<dbReference type="GlyConnect" id="186">
    <property type="glycosylation" value="5 N-Linked glycans, 4 O-Linked glycans"/>
</dbReference>
<dbReference type="GlyCosmos" id="P14220">
    <property type="glycosylation" value="No site information, 15 glycans"/>
</dbReference>
<dbReference type="GlyGen" id="P14220">
    <property type="glycosylation" value="1 site, 9 N-linked glycans (1 site), 6 O-linked glycans (1 site)"/>
</dbReference>
<dbReference type="iPTMnet" id="P14220"/>
<dbReference type="PhosphoSitePlus" id="P14220"/>
<dbReference type="PaxDb" id="10090-ENSMUSP00000070836"/>
<dbReference type="PeptideAtlas" id="P14220"/>
<dbReference type="ProteomicsDB" id="267634"/>
<dbReference type="DNASU" id="14934"/>
<dbReference type="Ensembl" id="ENSMUST00000063359.8">
    <property type="protein sequence ID" value="ENSMUSP00000070836.7"/>
    <property type="gene ID" value="ENSMUSG00000051839.8"/>
</dbReference>
<dbReference type="GeneID" id="14934"/>
<dbReference type="KEGG" id="mmu:14934"/>
<dbReference type="UCSC" id="uc009miz.1">
    <property type="organism name" value="mouse"/>
</dbReference>
<dbReference type="AGR" id="MGI:95880"/>
<dbReference type="CTD" id="2993"/>
<dbReference type="MGI" id="MGI:95880">
    <property type="gene designation" value="Gypa"/>
</dbReference>
<dbReference type="VEuPathDB" id="HostDB:ENSMUSG00000051839"/>
<dbReference type="eggNOG" id="ENOG502THAT">
    <property type="taxonomic scope" value="Eukaryota"/>
</dbReference>
<dbReference type="GeneTree" id="ENSGT00550000075214"/>
<dbReference type="HOGENOM" id="CLU_1585936_0_0_1"/>
<dbReference type="InParanoid" id="P14220"/>
<dbReference type="OMA" id="SYCISRM"/>
<dbReference type="OrthoDB" id="9629573at2759"/>
<dbReference type="TreeFam" id="TF338555"/>
<dbReference type="BioGRID-ORCS" id="14934">
    <property type="hits" value="2 hits in 76 CRISPR screens"/>
</dbReference>
<dbReference type="PRO" id="PR:P14220"/>
<dbReference type="Proteomes" id="UP000000589">
    <property type="component" value="Chromosome 8"/>
</dbReference>
<dbReference type="RNAct" id="P14220">
    <property type="molecule type" value="protein"/>
</dbReference>
<dbReference type="Bgee" id="ENSMUSG00000051839">
    <property type="expression patterns" value="Expressed in fetal liver hematopoietic progenitor cell and 86 other cell types or tissues"/>
</dbReference>
<dbReference type="ExpressionAtlas" id="P14220">
    <property type="expression patterns" value="baseline and differential"/>
</dbReference>
<dbReference type="GO" id="GO:0170014">
    <property type="term" value="C:ankyrin-1 complex"/>
    <property type="evidence" value="ECO:0000250"/>
    <property type="project" value="UniProtKB"/>
</dbReference>
<dbReference type="GO" id="GO:0009897">
    <property type="term" value="C:external side of plasma membrane"/>
    <property type="evidence" value="ECO:0000314"/>
    <property type="project" value="MGI"/>
</dbReference>
<dbReference type="GO" id="GO:0005886">
    <property type="term" value="C:plasma membrane"/>
    <property type="evidence" value="ECO:0000314"/>
    <property type="project" value="MGI"/>
</dbReference>
<dbReference type="GO" id="GO:0042802">
    <property type="term" value="F:identical protein binding"/>
    <property type="evidence" value="ECO:0000353"/>
    <property type="project" value="MGI"/>
</dbReference>
<dbReference type="GO" id="GO:0047484">
    <property type="term" value="P:regulation of response to osmotic stress"/>
    <property type="evidence" value="ECO:0000315"/>
    <property type="project" value="MGI"/>
</dbReference>
<dbReference type="Gene3D" id="1.20.5.70">
    <property type="match status" value="1"/>
</dbReference>
<dbReference type="InterPro" id="IPR001195">
    <property type="entry name" value="Glycophorin"/>
</dbReference>
<dbReference type="InterPro" id="IPR018938">
    <property type="entry name" value="Glycophorin_CS"/>
</dbReference>
<dbReference type="InterPro" id="IPR049535">
    <property type="entry name" value="GYPA_B"/>
</dbReference>
<dbReference type="PANTHER" id="PTHR13813">
    <property type="entry name" value="GLYCOPHORIN"/>
    <property type="match status" value="1"/>
</dbReference>
<dbReference type="PANTHER" id="PTHR13813:SF3">
    <property type="entry name" value="GLYCOPHORIN-A"/>
    <property type="match status" value="1"/>
</dbReference>
<dbReference type="Pfam" id="PF01102">
    <property type="entry name" value="Glycophorin_A"/>
    <property type="match status" value="1"/>
</dbReference>
<dbReference type="PIRSF" id="PIRSF002466">
    <property type="entry name" value="Glycophorin"/>
    <property type="match status" value="1"/>
</dbReference>
<dbReference type="PROSITE" id="PS00312">
    <property type="entry name" value="GLYCOPHORIN_A"/>
    <property type="match status" value="1"/>
</dbReference>
<comment type="function">
    <text evidence="2">Component of the ankyrin-1 complex, a multiprotein complex involved in the stability and shape of the erythrocyte membrane. Glycophorin A is the major intrinsic membrane protein of the erythrocyte. The N-terminal glycosylated segment, which lies outside the erythrocyte membrane, has MN blood group receptors. Appears to be important for the function of SLC4A1 and is required for high activity of SLC4A1. May be involved in translocation of SLC4A1 to the plasma membrane.</text>
</comment>
<comment type="subunit">
    <text evidence="2">Homodimer. Component of the ankyrin-1 complex in the erythrocyte, composed of ANK1, RHCE, RHAG, SLC4A1, EPB42, GYPA, GYPB and AQP1. Interacts with SLC4A1; a GYPA monomer is bound at each end of the SLC4A1 dimer forming a heterotetramer.</text>
</comment>
<comment type="subcellular location">
    <subcellularLocation>
        <location>Membrane</location>
        <topology>Single-pass type III membrane protein</topology>
    </subcellularLocation>
</comment>
<comment type="PTM">
    <text evidence="1">The N-terminal extracellular domain is heavily glycosylated on serine and threonine residues.</text>
</comment>
<comment type="disruption phenotype">
    <text evidence="4">The amount of O-linked oligosaccharide chains in the erythrocyte membrane decreases to 60% compared to that of the wild-type mice. Erythrocytes lacking GPA are more sensitive to hypo-osmotic stress.</text>
</comment>
<comment type="similarity">
    <text evidence="5">Belongs to the glycophorin-A family.</text>
</comment>
<name>GLPA_MOUSE</name>
<proteinExistence type="evidence at protein level"/>
<keyword id="KW-0903">Direct protein sequencing</keyword>
<keyword id="KW-0325">Glycoprotein</keyword>
<keyword id="KW-0472">Membrane</keyword>
<keyword id="KW-0597">Phosphoprotein</keyword>
<keyword id="KW-1185">Reference proteome</keyword>
<keyword id="KW-0730">Sialic acid</keyword>
<keyword id="KW-0812">Transmembrane</keyword>
<keyword id="KW-1133">Transmembrane helix</keyword>
<gene>
    <name evidence="6" type="primary">Gypa</name>
</gene>
<reference key="1">
    <citation type="journal article" date="1989" name="Gene">
        <title>Isolation of the cDNA clone for mouse glycophorin, erythroid-specific membrane protein.</title>
        <authorList>
            <person name="Matsui Y."/>
            <person name="Natori S."/>
            <person name="Obinata M."/>
        </authorList>
    </citation>
    <scope>NUCLEOTIDE SEQUENCE [MRNA]</scope>
    <scope>PROTEIN SEQUENCE OF 138-146</scope>
    <source>
        <strain>BALB/cJ</strain>
    </source>
</reference>
<reference key="2">
    <citation type="journal article" date="1991" name="Biochem. Biophys. Res. Commun.">
        <title>Full length mouse glycophorin gene constructed using recombinant polymerase chain reaction.</title>
        <authorList>
            <person name="Gu H."/>
            <person name="Planas J."/>
            <person name="Gomez R."/>
            <person name="Wilson D.J."/>
        </authorList>
    </citation>
    <scope>NUCLEOTIDE SEQUENCE [GENOMIC DNA]</scope>
    <scope>SEQUENCE REVISION</scope>
</reference>
<reference key="3">
    <citation type="journal article" date="2003" name="Genes Cells">
        <title>Glycophorin A requirement for expression of O-linked antigens on the erythrocyte membrane.</title>
        <authorList>
            <person name="Arimitsu N."/>
            <person name="Akimitsu N."/>
            <person name="Kotani N."/>
            <person name="Takasaki S."/>
            <person name="Kina T."/>
            <person name="Hamamoto H."/>
            <person name="Kamura K."/>
            <person name="Sekimizu K."/>
        </authorList>
    </citation>
    <scope>DISRUPTION PHENOTYPE</scope>
</reference>
<reference key="4">
    <citation type="journal article" date="2010" name="Cell">
        <title>A tissue-specific atlas of mouse protein phosphorylation and expression.</title>
        <authorList>
            <person name="Huttlin E.L."/>
            <person name="Jedrychowski M.P."/>
            <person name="Elias J.E."/>
            <person name="Goswami T."/>
            <person name="Rad R."/>
            <person name="Beausoleil S.A."/>
            <person name="Villen J."/>
            <person name="Haas W."/>
            <person name="Sowa M.E."/>
            <person name="Gygi S.P."/>
        </authorList>
    </citation>
    <scope>PHOSPHORYLATION [LARGE SCALE ANALYSIS] AT THR-160 AND SER-166</scope>
    <scope>IDENTIFICATION BY MASS SPECTROMETRY [LARGE SCALE ANALYSIS]</scope>
    <source>
        <tissue>Brown adipose tissue</tissue>
        <tissue>Heart</tissue>
        <tissue>Liver</tissue>
        <tissue>Lung</tissue>
        <tissue>Spleen</tissue>
    </source>
</reference>
<organism>
    <name type="scientific">Mus musculus</name>
    <name type="common">Mouse</name>
    <dbReference type="NCBI Taxonomy" id="10090"/>
    <lineage>
        <taxon>Eukaryota</taxon>
        <taxon>Metazoa</taxon>
        <taxon>Chordata</taxon>
        <taxon>Craniata</taxon>
        <taxon>Vertebrata</taxon>
        <taxon>Euteleostomi</taxon>
        <taxon>Mammalia</taxon>
        <taxon>Eutheria</taxon>
        <taxon>Euarchontoglires</taxon>
        <taxon>Glires</taxon>
        <taxon>Rodentia</taxon>
        <taxon>Myomorpha</taxon>
        <taxon>Muroidea</taxon>
        <taxon>Muridae</taxon>
        <taxon>Murinae</taxon>
        <taxon>Mus</taxon>
        <taxon>Mus</taxon>
    </lineage>
</organism>
<sequence length="168" mass="17664">MTESTAAVTTSGHSLTTTFHIPSSQHYQEEHSPSLSGSDSLLQITTPVVASTVGNPNQHSATMSTPAIHVSTYHTAPTEVSAAFEEQPVSPHIGGMPSPIQHDFPALVMILIILGVMAGIIGTILLISYCISRMTKKSSVDIQSPEGGDNSVPLSSIEQTPNEESSNV</sequence>
<feature type="chain" id="PRO_0000149048" description="Glycophorin-A">
    <location>
        <begin position="1"/>
        <end position="168"/>
    </location>
</feature>
<feature type="topological domain" description="Extracellular">
    <location>
        <begin position="1"/>
        <end position="108"/>
    </location>
</feature>
<feature type="transmembrane region" description="Helical; Signal-anchor for type III membrane protein">
    <location>
        <begin position="109"/>
        <end position="131"/>
    </location>
</feature>
<feature type="topological domain" description="Cytoplasmic">
    <location>
        <begin position="132"/>
        <end position="168"/>
    </location>
</feature>
<feature type="region of interest" description="Disordered" evidence="3">
    <location>
        <begin position="139"/>
        <end position="168"/>
    </location>
</feature>
<feature type="compositionally biased region" description="Polar residues" evidence="3">
    <location>
        <begin position="152"/>
        <end position="168"/>
    </location>
</feature>
<feature type="modified residue" description="Phosphoserine" evidence="2">
    <location>
        <position position="155"/>
    </location>
</feature>
<feature type="modified residue" description="Phosphothreonine" evidence="7">
    <location>
        <position position="160"/>
    </location>
</feature>
<feature type="modified residue" description="Phosphoserine" evidence="2">
    <location>
        <position position="165"/>
    </location>
</feature>
<feature type="modified residue" description="Phosphoserine" evidence="7">
    <location>
        <position position="166"/>
    </location>
</feature>
<feature type="sequence conflict" description="In Ref. 1; AA sequence." evidence="5" ref="1">
    <original>ATMSTPAIHVSTYHTAPTEVSAAFEEQPVSPHIGGMPSPI</original>
    <variation>SAAFEEQPVSPHIGGMPSPIATMSTPAIHVSTYHTAPTEV</variation>
    <location>
        <begin position="61"/>
        <end position="100"/>
    </location>
</feature>
<accession>P14220</accession>